<dbReference type="EC" id="4.1.1.50" evidence="1"/>
<dbReference type="EMBL" id="AE010301">
    <property type="status" value="NOT_ANNOTATED_CDS"/>
    <property type="molecule type" value="Genomic_DNA"/>
</dbReference>
<dbReference type="SMR" id="P0C0A0"/>
<dbReference type="STRING" id="189518.LB_312a"/>
<dbReference type="PaxDb" id="189518-LB_312a"/>
<dbReference type="InParanoid" id="P0C0A0"/>
<dbReference type="UniPathway" id="UPA00331">
    <property type="reaction ID" value="UER00451"/>
</dbReference>
<dbReference type="Proteomes" id="UP000001408">
    <property type="component" value="Chromosome II"/>
</dbReference>
<dbReference type="GO" id="GO:0005829">
    <property type="term" value="C:cytosol"/>
    <property type="evidence" value="ECO:0000318"/>
    <property type="project" value="GO_Central"/>
</dbReference>
<dbReference type="GO" id="GO:0004014">
    <property type="term" value="F:adenosylmethionine decarboxylase activity"/>
    <property type="evidence" value="ECO:0000318"/>
    <property type="project" value="GO_Central"/>
</dbReference>
<dbReference type="GO" id="GO:0008295">
    <property type="term" value="P:spermidine biosynthetic process"/>
    <property type="evidence" value="ECO:0000318"/>
    <property type="project" value="GO_Central"/>
</dbReference>
<dbReference type="FunFam" id="3.30.160.750:FF:000004">
    <property type="entry name" value="S-adenosylmethionine decarboxylase proenzyme"/>
    <property type="match status" value="1"/>
</dbReference>
<dbReference type="FunFam" id="3.30.360.110:FF:000001">
    <property type="entry name" value="S-adenosylmethionine decarboxylase proenzyme"/>
    <property type="match status" value="1"/>
</dbReference>
<dbReference type="Gene3D" id="3.30.160.750">
    <property type="match status" value="1"/>
</dbReference>
<dbReference type="Gene3D" id="3.30.360.110">
    <property type="entry name" value="S-adenosylmethionine decarboxylase domain"/>
    <property type="match status" value="1"/>
</dbReference>
<dbReference type="HAMAP" id="MF_00464">
    <property type="entry name" value="AdoMetDC_1"/>
    <property type="match status" value="1"/>
</dbReference>
<dbReference type="InterPro" id="IPR042286">
    <property type="entry name" value="AdoMetDC_C"/>
</dbReference>
<dbReference type="InterPro" id="IPR003826">
    <property type="entry name" value="AdoMetDC_fam_prok"/>
</dbReference>
<dbReference type="InterPro" id="IPR042284">
    <property type="entry name" value="AdoMetDC_N"/>
</dbReference>
<dbReference type="InterPro" id="IPR016067">
    <property type="entry name" value="S-AdoMet_deCO2ase_core"/>
</dbReference>
<dbReference type="InterPro" id="IPR017716">
    <property type="entry name" value="S-AdoMet_deCOase_pro-enz"/>
</dbReference>
<dbReference type="NCBIfam" id="TIGR03330">
    <property type="entry name" value="SAM_DCase_Bsu"/>
    <property type="match status" value="1"/>
</dbReference>
<dbReference type="PANTHER" id="PTHR33866">
    <property type="entry name" value="S-ADENOSYLMETHIONINE DECARBOXYLASE PROENZYME"/>
    <property type="match status" value="1"/>
</dbReference>
<dbReference type="PANTHER" id="PTHR33866:SF2">
    <property type="entry name" value="S-ADENOSYLMETHIONINE DECARBOXYLASE PROENZYME"/>
    <property type="match status" value="1"/>
</dbReference>
<dbReference type="Pfam" id="PF02675">
    <property type="entry name" value="AdoMet_dc"/>
    <property type="match status" value="1"/>
</dbReference>
<dbReference type="SUPFAM" id="SSF56276">
    <property type="entry name" value="S-adenosylmethionine decarboxylase"/>
    <property type="match status" value="1"/>
</dbReference>
<organism>
    <name type="scientific">Leptospira interrogans serogroup Icterohaemorrhagiae serovar Lai (strain 56601)</name>
    <dbReference type="NCBI Taxonomy" id="189518"/>
    <lineage>
        <taxon>Bacteria</taxon>
        <taxon>Pseudomonadati</taxon>
        <taxon>Spirochaetota</taxon>
        <taxon>Spirochaetia</taxon>
        <taxon>Leptospirales</taxon>
        <taxon>Leptospiraceae</taxon>
        <taxon>Leptospira</taxon>
    </lineage>
</organism>
<comment type="function">
    <text evidence="1">Catalyzes the decarboxylation of S-adenosylmethionine to S-adenosylmethioninamine (dcAdoMet), the propylamine donor required for the synthesis of the polyamines spermine and spermidine from the diamine putrescine.</text>
</comment>
<comment type="catalytic activity">
    <reaction evidence="1">
        <text>S-adenosyl-L-methionine + H(+) = S-adenosyl 3-(methylsulfanyl)propylamine + CO2</text>
        <dbReference type="Rhea" id="RHEA:15981"/>
        <dbReference type="ChEBI" id="CHEBI:15378"/>
        <dbReference type="ChEBI" id="CHEBI:16526"/>
        <dbReference type="ChEBI" id="CHEBI:57443"/>
        <dbReference type="ChEBI" id="CHEBI:59789"/>
        <dbReference type="EC" id="4.1.1.50"/>
    </reaction>
</comment>
<comment type="cofactor">
    <cofactor evidence="1">
        <name>pyruvate</name>
        <dbReference type="ChEBI" id="CHEBI:15361"/>
    </cofactor>
    <text evidence="1">Binds 1 pyruvoyl group covalently per subunit.</text>
</comment>
<comment type="pathway">
    <text evidence="1">Amine and polyamine biosynthesis; S-adenosylmethioninamine biosynthesis; S-adenosylmethioninamine from S-adenosyl-L-methionine: step 1/1.</text>
</comment>
<comment type="subunit">
    <text evidence="1">Heterotetramer of two alpha and two beta chains arranged as a dimer of alpha/beta heterodimers.</text>
</comment>
<comment type="PTM">
    <text evidence="1">Is synthesized initially as an inactive proenzyme. Formation of the active enzyme involves a self-maturation process in which the active site pyruvoyl group is generated from an internal serine residue via an autocatalytic post-translational modification. Two non-identical subunits are generated from the proenzyme in this reaction, and the pyruvate is formed at the N-terminus of the alpha chain, which is derived from the carboxyl end of the proenzyme. The post-translation cleavage follows an unusual pathway, termed non-hydrolytic serinolysis, in which the side chain hydroxyl group of the serine supplies its oxygen atom to form the C-terminus of the beta chain, while the remainder of the serine residue undergoes an oxidative deamination to produce ammonia and the pyruvoyl group blocking the N-terminus of the alpha chain.</text>
</comment>
<comment type="similarity">
    <text evidence="1">Belongs to the prokaryotic AdoMetDC family. Type 1 subfamily.</text>
</comment>
<proteinExistence type="inferred from homology"/>
<sequence>MNALGKHVIAEFYECDYETINNHELVEDIMLKSVDLSGATTIKSVFHRFSPYGVSGVVVVSESHFAIHTWPEYGYCAVDVFTCGDLIDNQAALDYLKEKFGSKNVSVVEMKRGVLNLGVDLHHKPVGN</sequence>
<reference key="1">
    <citation type="journal article" date="2003" name="Nature">
        <title>Unique physiological and pathogenic features of Leptospira interrogans revealed by whole-genome sequencing.</title>
        <authorList>
            <person name="Ren S.-X."/>
            <person name="Fu G."/>
            <person name="Jiang X.-G."/>
            <person name="Zeng R."/>
            <person name="Miao Y.-G."/>
            <person name="Xu H."/>
            <person name="Zhang Y.-X."/>
            <person name="Xiong H."/>
            <person name="Lu G."/>
            <person name="Lu L.-F."/>
            <person name="Jiang H.-Q."/>
            <person name="Jia J."/>
            <person name="Tu Y.-F."/>
            <person name="Jiang J.-X."/>
            <person name="Gu W.-Y."/>
            <person name="Zhang Y.-Q."/>
            <person name="Cai Z."/>
            <person name="Sheng H.-H."/>
            <person name="Yin H.-F."/>
            <person name="Zhang Y."/>
            <person name="Zhu G.-F."/>
            <person name="Wan M."/>
            <person name="Huang H.-L."/>
            <person name="Qian Z."/>
            <person name="Wang S.-Y."/>
            <person name="Ma W."/>
            <person name="Yao Z.-J."/>
            <person name="Shen Y."/>
            <person name="Qiang B.-Q."/>
            <person name="Xia Q.-C."/>
            <person name="Guo X.-K."/>
            <person name="Danchin A."/>
            <person name="Saint Girons I."/>
            <person name="Somerville R.L."/>
            <person name="Wen Y.-M."/>
            <person name="Shi M.-H."/>
            <person name="Chen Z."/>
            <person name="Xu J.-G."/>
            <person name="Zhao G.-P."/>
        </authorList>
    </citation>
    <scope>NUCLEOTIDE SEQUENCE [LARGE SCALE GENOMIC DNA]</scope>
    <source>
        <strain>56601</strain>
    </source>
</reference>
<evidence type="ECO:0000255" key="1">
    <source>
        <dbReference type="HAMAP-Rule" id="MF_00464"/>
    </source>
</evidence>
<protein>
    <recommendedName>
        <fullName evidence="1">S-adenosylmethionine decarboxylase proenzyme</fullName>
        <shortName evidence="1">AdoMetDC</shortName>
        <shortName evidence="1">SAMDC</shortName>
        <ecNumber evidence="1">4.1.1.50</ecNumber>
    </recommendedName>
    <component>
        <recommendedName>
            <fullName evidence="1">S-adenosylmethionine decarboxylase beta chain</fullName>
        </recommendedName>
    </component>
    <component>
        <recommendedName>
            <fullName evidence="1">S-adenosylmethionine decarboxylase alpha chain</fullName>
        </recommendedName>
    </component>
</protein>
<accession>P0C0A0</accession>
<name>SPEH_LEPIN</name>
<gene>
    <name evidence="1" type="primary">speH</name>
    <name type="ordered locus">LB_314.1</name>
</gene>
<feature type="chain" id="PRO_0000030109" description="S-adenosylmethionine decarboxylase beta chain" evidence="1">
    <location>
        <begin position="1"/>
        <end position="62"/>
    </location>
</feature>
<feature type="chain" id="PRO_0000030110" description="S-adenosylmethionine decarboxylase alpha chain" evidence="1">
    <location>
        <begin position="63"/>
        <end position="128"/>
    </location>
</feature>
<feature type="active site" description="Schiff-base intermediate with substrate; via pyruvic acid" evidence="1">
    <location>
        <position position="63"/>
    </location>
</feature>
<feature type="active site" description="Proton acceptor; for processing activity" evidence="1">
    <location>
        <position position="68"/>
    </location>
</feature>
<feature type="active site" description="Proton donor; for catalytic activity" evidence="1">
    <location>
        <position position="83"/>
    </location>
</feature>
<feature type="site" description="Cleavage (non-hydrolytic); by autolysis" evidence="1">
    <location>
        <begin position="62"/>
        <end position="63"/>
    </location>
</feature>
<feature type="modified residue" description="Pyruvic acid (Ser); by autocatalysis" evidence="1">
    <location>
        <position position="63"/>
    </location>
</feature>
<keyword id="KW-0068">Autocatalytic cleavage</keyword>
<keyword id="KW-0210">Decarboxylase</keyword>
<keyword id="KW-0456">Lyase</keyword>
<keyword id="KW-0620">Polyamine biosynthesis</keyword>
<keyword id="KW-0670">Pyruvate</keyword>
<keyword id="KW-1185">Reference proteome</keyword>
<keyword id="KW-0949">S-adenosyl-L-methionine</keyword>
<keyword id="KW-0704">Schiff base</keyword>
<keyword id="KW-0745">Spermidine biosynthesis</keyword>
<keyword id="KW-0865">Zymogen</keyword>